<name>ARGD_VIBCH</name>
<sequence length="403" mass="43577">MTVEMSVDRSSFDEVMVPCYNPMEFIPVKGFGSRIWDQQGHEYIDFAGGIAVSCLGHCHPVMVQALTTQANKLWHLSNVMTNEPALRLAKKLTQVSFAEKVFFANSGAEANEAALKLARRYAADVYGPEKSEIIAFNQGFHGRTFFTVSVGGQATYSDGFGPKPGDIVHLPYNDLAALQAQISDRTCAVMMEPLQGEGGIVSPSAEFVQAVRELCDKHNALLIFDEVQTGNGRTGDFYAYQGIGVTPDILATAKSLGGGFPIGAMLTTAKIAEHMKVGVHGSTYGGNPLACAVAEAVVDFVAQPEILAGVKQREQWMRAELEKINQKYQLFKEIRGKGLLLGAALNDEWQGRARDILVAAGKQGLMVLVAGASVVRFTPSLIISQQEIEEGMARLDKAIATLM</sequence>
<protein>
    <recommendedName>
        <fullName evidence="1">Acetylornithine aminotransferase</fullName>
        <shortName evidence="1">ACOAT</shortName>
        <ecNumber evidence="1">2.6.1.11</ecNumber>
    </recommendedName>
</protein>
<organism>
    <name type="scientific">Vibrio cholerae serotype O1 (strain ATCC 39315 / El Tor Inaba N16961)</name>
    <dbReference type="NCBI Taxonomy" id="243277"/>
    <lineage>
        <taxon>Bacteria</taxon>
        <taxon>Pseudomonadati</taxon>
        <taxon>Pseudomonadota</taxon>
        <taxon>Gammaproteobacteria</taxon>
        <taxon>Vibrionales</taxon>
        <taxon>Vibrionaceae</taxon>
        <taxon>Vibrio</taxon>
    </lineage>
</organism>
<accession>Q9KNW2</accession>
<keyword id="KW-0028">Amino-acid biosynthesis</keyword>
<keyword id="KW-0032">Aminotransferase</keyword>
<keyword id="KW-0055">Arginine biosynthesis</keyword>
<keyword id="KW-0963">Cytoplasm</keyword>
<keyword id="KW-0663">Pyridoxal phosphate</keyword>
<keyword id="KW-1185">Reference proteome</keyword>
<keyword id="KW-0808">Transferase</keyword>
<comment type="catalytic activity">
    <reaction evidence="1">
        <text>N(2)-acetyl-L-ornithine + 2-oxoglutarate = N-acetyl-L-glutamate 5-semialdehyde + L-glutamate</text>
        <dbReference type="Rhea" id="RHEA:18049"/>
        <dbReference type="ChEBI" id="CHEBI:16810"/>
        <dbReference type="ChEBI" id="CHEBI:29123"/>
        <dbReference type="ChEBI" id="CHEBI:29985"/>
        <dbReference type="ChEBI" id="CHEBI:57805"/>
        <dbReference type="EC" id="2.6.1.11"/>
    </reaction>
</comment>
<comment type="cofactor">
    <cofactor evidence="1">
        <name>pyridoxal 5'-phosphate</name>
        <dbReference type="ChEBI" id="CHEBI:597326"/>
    </cofactor>
    <text evidence="1">Binds 1 pyridoxal phosphate per subunit.</text>
</comment>
<comment type="pathway">
    <text evidence="1">Amino-acid biosynthesis; L-arginine biosynthesis; N(2)-acetyl-L-ornithine from L-glutamate: step 4/4.</text>
</comment>
<comment type="subunit">
    <text evidence="1">Homodimer.</text>
</comment>
<comment type="subcellular location">
    <subcellularLocation>
        <location evidence="1">Cytoplasm</location>
    </subcellularLocation>
</comment>
<comment type="miscellaneous">
    <text evidence="1">May also have succinyldiaminopimelate aminotransferase activity, thus carrying out the corresponding step in lysine biosynthesis.</text>
</comment>
<comment type="similarity">
    <text evidence="1">Belongs to the class-III pyridoxal-phosphate-dependent aminotransferase family. ArgD subfamily.</text>
</comment>
<proteinExistence type="inferred from homology"/>
<reference key="1">
    <citation type="journal article" date="2000" name="Nature">
        <title>DNA sequence of both chromosomes of the cholera pathogen Vibrio cholerae.</title>
        <authorList>
            <person name="Heidelberg J.F."/>
            <person name="Eisen J.A."/>
            <person name="Nelson W.C."/>
            <person name="Clayton R.A."/>
            <person name="Gwinn M.L."/>
            <person name="Dodson R.J."/>
            <person name="Haft D.H."/>
            <person name="Hickey E.K."/>
            <person name="Peterson J.D."/>
            <person name="Umayam L.A."/>
            <person name="Gill S.R."/>
            <person name="Nelson K.E."/>
            <person name="Read T.D."/>
            <person name="Tettelin H."/>
            <person name="Richardson D.L."/>
            <person name="Ermolaeva M.D."/>
            <person name="Vamathevan J.J."/>
            <person name="Bass S."/>
            <person name="Qin H."/>
            <person name="Dragoi I."/>
            <person name="Sellers P."/>
            <person name="McDonald L.A."/>
            <person name="Utterback T.R."/>
            <person name="Fleischmann R.D."/>
            <person name="Nierman W.C."/>
            <person name="White O."/>
            <person name="Salzberg S.L."/>
            <person name="Smith H.O."/>
            <person name="Colwell R.R."/>
            <person name="Mekalanos J.J."/>
            <person name="Venter J.C."/>
            <person name="Fraser C.M."/>
        </authorList>
    </citation>
    <scope>NUCLEOTIDE SEQUENCE [LARGE SCALE GENOMIC DNA]</scope>
    <source>
        <strain>ATCC 39315 / El Tor Inaba N16961</strain>
    </source>
</reference>
<dbReference type="EC" id="2.6.1.11" evidence="1"/>
<dbReference type="EMBL" id="AE003852">
    <property type="protein sequence ID" value="AAF95759.1"/>
    <property type="molecule type" value="Genomic_DNA"/>
</dbReference>
<dbReference type="PIR" id="F82054">
    <property type="entry name" value="F82054"/>
</dbReference>
<dbReference type="RefSeq" id="NP_232246.1">
    <property type="nucleotide sequence ID" value="NC_002505.1"/>
</dbReference>
<dbReference type="RefSeq" id="WP_000215482.1">
    <property type="nucleotide sequence ID" value="NZ_LT906614.1"/>
</dbReference>
<dbReference type="SMR" id="Q9KNW2"/>
<dbReference type="STRING" id="243277.VC_2618"/>
<dbReference type="DNASU" id="2615635"/>
<dbReference type="EnsemblBacteria" id="AAF95759">
    <property type="protein sequence ID" value="AAF95759"/>
    <property type="gene ID" value="VC_2618"/>
</dbReference>
<dbReference type="KEGG" id="vch:VC_2618"/>
<dbReference type="PATRIC" id="fig|243277.26.peg.2496"/>
<dbReference type="eggNOG" id="COG4992">
    <property type="taxonomic scope" value="Bacteria"/>
</dbReference>
<dbReference type="HOGENOM" id="CLU_016922_10_1_6"/>
<dbReference type="UniPathway" id="UPA00068">
    <property type="reaction ID" value="UER00109"/>
</dbReference>
<dbReference type="Proteomes" id="UP000000584">
    <property type="component" value="Chromosome 1"/>
</dbReference>
<dbReference type="GO" id="GO:0005737">
    <property type="term" value="C:cytoplasm"/>
    <property type="evidence" value="ECO:0007669"/>
    <property type="project" value="UniProtKB-SubCell"/>
</dbReference>
<dbReference type="GO" id="GO:0042802">
    <property type="term" value="F:identical protein binding"/>
    <property type="evidence" value="ECO:0000318"/>
    <property type="project" value="GO_Central"/>
</dbReference>
<dbReference type="GO" id="GO:0003992">
    <property type="term" value="F:N2-acetyl-L-ornithine:2-oxoglutarate 5-aminotransferase activity"/>
    <property type="evidence" value="ECO:0007669"/>
    <property type="project" value="UniProtKB-UniRule"/>
</dbReference>
<dbReference type="GO" id="GO:0030170">
    <property type="term" value="F:pyridoxal phosphate binding"/>
    <property type="evidence" value="ECO:0000318"/>
    <property type="project" value="GO_Central"/>
</dbReference>
<dbReference type="GO" id="GO:0006526">
    <property type="term" value="P:L-arginine biosynthetic process"/>
    <property type="evidence" value="ECO:0007669"/>
    <property type="project" value="UniProtKB-UniRule"/>
</dbReference>
<dbReference type="CDD" id="cd00610">
    <property type="entry name" value="OAT_like"/>
    <property type="match status" value="1"/>
</dbReference>
<dbReference type="FunFam" id="3.40.640.10:FF:000004">
    <property type="entry name" value="Acetylornithine aminotransferase"/>
    <property type="match status" value="1"/>
</dbReference>
<dbReference type="Gene3D" id="3.90.1150.10">
    <property type="entry name" value="Aspartate Aminotransferase, domain 1"/>
    <property type="match status" value="1"/>
</dbReference>
<dbReference type="Gene3D" id="3.40.640.10">
    <property type="entry name" value="Type I PLP-dependent aspartate aminotransferase-like (Major domain)"/>
    <property type="match status" value="1"/>
</dbReference>
<dbReference type="HAMAP" id="MF_01107">
    <property type="entry name" value="ArgD_aminotrans_3"/>
    <property type="match status" value="1"/>
</dbReference>
<dbReference type="InterPro" id="IPR017652">
    <property type="entry name" value="Ac/SucOrn_transaminase_bac"/>
</dbReference>
<dbReference type="InterPro" id="IPR004636">
    <property type="entry name" value="AcOrn/SuccOrn_fam"/>
</dbReference>
<dbReference type="InterPro" id="IPR005814">
    <property type="entry name" value="Aminotrans_3"/>
</dbReference>
<dbReference type="InterPro" id="IPR049704">
    <property type="entry name" value="Aminotrans_3_PPA_site"/>
</dbReference>
<dbReference type="InterPro" id="IPR050103">
    <property type="entry name" value="Class-III_PLP-dep_AT"/>
</dbReference>
<dbReference type="InterPro" id="IPR015424">
    <property type="entry name" value="PyrdxlP-dep_Trfase"/>
</dbReference>
<dbReference type="InterPro" id="IPR015421">
    <property type="entry name" value="PyrdxlP-dep_Trfase_major"/>
</dbReference>
<dbReference type="InterPro" id="IPR015422">
    <property type="entry name" value="PyrdxlP-dep_Trfase_small"/>
</dbReference>
<dbReference type="NCBIfam" id="TIGR03246">
    <property type="entry name" value="arg_catab_astC"/>
    <property type="match status" value="1"/>
</dbReference>
<dbReference type="NCBIfam" id="TIGR00707">
    <property type="entry name" value="argD"/>
    <property type="match status" value="1"/>
</dbReference>
<dbReference type="NCBIfam" id="NF002325">
    <property type="entry name" value="PRK01278.1"/>
    <property type="match status" value="1"/>
</dbReference>
<dbReference type="NCBIfam" id="NF003468">
    <property type="entry name" value="PRK05093.1"/>
    <property type="match status" value="1"/>
</dbReference>
<dbReference type="NCBIfam" id="NF009047">
    <property type="entry name" value="PRK12381.1"/>
    <property type="match status" value="1"/>
</dbReference>
<dbReference type="PANTHER" id="PTHR11986">
    <property type="entry name" value="AMINOTRANSFERASE CLASS III"/>
    <property type="match status" value="1"/>
</dbReference>
<dbReference type="PANTHER" id="PTHR11986:SF113">
    <property type="entry name" value="SUCCINYLORNITHINE TRANSAMINASE"/>
    <property type="match status" value="1"/>
</dbReference>
<dbReference type="Pfam" id="PF00202">
    <property type="entry name" value="Aminotran_3"/>
    <property type="match status" value="1"/>
</dbReference>
<dbReference type="PIRSF" id="PIRSF000521">
    <property type="entry name" value="Transaminase_4ab_Lys_Orn"/>
    <property type="match status" value="1"/>
</dbReference>
<dbReference type="SUPFAM" id="SSF53383">
    <property type="entry name" value="PLP-dependent transferases"/>
    <property type="match status" value="1"/>
</dbReference>
<dbReference type="PROSITE" id="PS00600">
    <property type="entry name" value="AA_TRANSFER_CLASS_3"/>
    <property type="match status" value="1"/>
</dbReference>
<feature type="chain" id="PRO_0000112808" description="Acetylornithine aminotransferase">
    <location>
        <begin position="1"/>
        <end position="403"/>
    </location>
</feature>
<feature type="binding site" evidence="1">
    <location>
        <begin position="107"/>
        <end position="108"/>
    </location>
    <ligand>
        <name>pyridoxal 5'-phosphate</name>
        <dbReference type="ChEBI" id="CHEBI:597326"/>
    </ligand>
</feature>
<feature type="binding site" evidence="1">
    <location>
        <position position="140"/>
    </location>
    <ligand>
        <name>pyridoxal 5'-phosphate</name>
        <dbReference type="ChEBI" id="CHEBI:597326"/>
    </ligand>
</feature>
<feature type="binding site" evidence="1">
    <location>
        <position position="143"/>
    </location>
    <ligand>
        <name>N(2)-acetyl-L-ornithine</name>
        <dbReference type="ChEBI" id="CHEBI:57805"/>
    </ligand>
</feature>
<feature type="binding site" evidence="1">
    <location>
        <begin position="225"/>
        <end position="228"/>
    </location>
    <ligand>
        <name>pyridoxal 5'-phosphate</name>
        <dbReference type="ChEBI" id="CHEBI:597326"/>
    </ligand>
</feature>
<feature type="binding site" evidence="1">
    <location>
        <position position="282"/>
    </location>
    <ligand>
        <name>N(2)-acetyl-L-ornithine</name>
        <dbReference type="ChEBI" id="CHEBI:57805"/>
    </ligand>
</feature>
<feature type="binding site" evidence="1">
    <location>
        <position position="283"/>
    </location>
    <ligand>
        <name>pyridoxal 5'-phosphate</name>
        <dbReference type="ChEBI" id="CHEBI:597326"/>
    </ligand>
</feature>
<feature type="modified residue" description="N6-(pyridoxal phosphate)lysine" evidence="1">
    <location>
        <position position="254"/>
    </location>
</feature>
<evidence type="ECO:0000255" key="1">
    <source>
        <dbReference type="HAMAP-Rule" id="MF_01107"/>
    </source>
</evidence>
<gene>
    <name evidence="1" type="primary">argD</name>
    <name type="ordered locus">VC_2618</name>
</gene>